<evidence type="ECO:0000255" key="1">
    <source>
        <dbReference type="HAMAP-Rule" id="MF_00081"/>
    </source>
</evidence>
<feature type="chain" id="PRO_0000182511" description="Heat-inducible transcription repressor HrcA">
    <location>
        <begin position="1"/>
        <end position="347"/>
    </location>
</feature>
<keyword id="KW-1185">Reference proteome</keyword>
<keyword id="KW-0678">Repressor</keyword>
<keyword id="KW-0346">Stress response</keyword>
<keyword id="KW-0804">Transcription</keyword>
<keyword id="KW-0805">Transcription regulation</keyword>
<protein>
    <recommendedName>
        <fullName evidence="1">Heat-inducible transcription repressor HrcA</fullName>
    </recommendedName>
</protein>
<proteinExistence type="inferred from homology"/>
<comment type="function">
    <text evidence="1">Negative regulator of class I heat shock genes (grpE-dnaK-dnaJ and groELS operons). Prevents heat-shock induction of these operons.</text>
</comment>
<comment type="similarity">
    <text evidence="1">Belongs to the HrcA family.</text>
</comment>
<reference key="1">
    <citation type="journal article" date="2001" name="Nucleic Acids Res.">
        <title>The complete genome sequence of the murine respiratory pathogen Mycoplasma pulmonis.</title>
        <authorList>
            <person name="Chambaud I."/>
            <person name="Heilig R."/>
            <person name="Ferris S."/>
            <person name="Barbe V."/>
            <person name="Samson D."/>
            <person name="Galisson F."/>
            <person name="Moszer I."/>
            <person name="Dybvig K."/>
            <person name="Wroblewski H."/>
            <person name="Viari A."/>
            <person name="Rocha E.P.C."/>
            <person name="Blanchard A."/>
        </authorList>
    </citation>
    <scope>NUCLEOTIDE SEQUENCE [LARGE SCALE GENOMIC DNA]</scope>
    <source>
        <strain>UAB CTIP</strain>
    </source>
</reference>
<accession>Q98R68</accession>
<dbReference type="EMBL" id="AL445563">
    <property type="protein sequence ID" value="CAC13315.1"/>
    <property type="molecule type" value="Genomic_DNA"/>
</dbReference>
<dbReference type="PIR" id="F90529">
    <property type="entry name" value="F90529"/>
</dbReference>
<dbReference type="RefSeq" id="WP_010924946.1">
    <property type="nucleotide sequence ID" value="NC_002771.1"/>
</dbReference>
<dbReference type="SMR" id="Q98R68"/>
<dbReference type="STRING" id="272635.gene:17576726"/>
<dbReference type="KEGG" id="mpu:MYPU_1420"/>
<dbReference type="eggNOG" id="COG1420">
    <property type="taxonomic scope" value="Bacteria"/>
</dbReference>
<dbReference type="HOGENOM" id="CLU_050019_1_0_14"/>
<dbReference type="BioCyc" id="MPUL272635:G1GT6-143-MONOMER"/>
<dbReference type="Proteomes" id="UP000000528">
    <property type="component" value="Chromosome"/>
</dbReference>
<dbReference type="GO" id="GO:0003677">
    <property type="term" value="F:DNA binding"/>
    <property type="evidence" value="ECO:0007669"/>
    <property type="project" value="InterPro"/>
</dbReference>
<dbReference type="GO" id="GO:0045892">
    <property type="term" value="P:negative regulation of DNA-templated transcription"/>
    <property type="evidence" value="ECO:0007669"/>
    <property type="project" value="UniProtKB-UniRule"/>
</dbReference>
<dbReference type="Gene3D" id="1.10.10.10">
    <property type="entry name" value="Winged helix-like DNA-binding domain superfamily/Winged helix DNA-binding domain"/>
    <property type="match status" value="1"/>
</dbReference>
<dbReference type="HAMAP" id="MF_00081">
    <property type="entry name" value="HrcA"/>
    <property type="match status" value="1"/>
</dbReference>
<dbReference type="InterPro" id="IPR002571">
    <property type="entry name" value="HrcA"/>
</dbReference>
<dbReference type="InterPro" id="IPR021153">
    <property type="entry name" value="HrcA_C"/>
</dbReference>
<dbReference type="InterPro" id="IPR036388">
    <property type="entry name" value="WH-like_DNA-bd_sf"/>
</dbReference>
<dbReference type="InterPro" id="IPR036390">
    <property type="entry name" value="WH_DNA-bd_sf"/>
</dbReference>
<dbReference type="NCBIfam" id="TIGR00331">
    <property type="entry name" value="hrcA"/>
    <property type="match status" value="1"/>
</dbReference>
<dbReference type="PANTHER" id="PTHR34824">
    <property type="entry name" value="HEAT-INDUCIBLE TRANSCRIPTION REPRESSOR HRCA"/>
    <property type="match status" value="1"/>
</dbReference>
<dbReference type="PANTHER" id="PTHR34824:SF1">
    <property type="entry name" value="HEAT-INDUCIBLE TRANSCRIPTION REPRESSOR HRCA"/>
    <property type="match status" value="1"/>
</dbReference>
<dbReference type="Pfam" id="PF01628">
    <property type="entry name" value="HrcA"/>
    <property type="match status" value="1"/>
</dbReference>
<dbReference type="PIRSF" id="PIRSF005485">
    <property type="entry name" value="HrcA"/>
    <property type="match status" value="1"/>
</dbReference>
<dbReference type="SUPFAM" id="SSF55781">
    <property type="entry name" value="GAF domain-like"/>
    <property type="match status" value="1"/>
</dbReference>
<dbReference type="SUPFAM" id="SSF46785">
    <property type="entry name" value="Winged helix' DNA-binding domain"/>
    <property type="match status" value="1"/>
</dbReference>
<gene>
    <name evidence="1" type="primary">hrcA</name>
    <name type="ordered locus">MYPU_1420</name>
</gene>
<name>HRCA_MYCPU</name>
<sequence length="347" mass="39856">MNFENKEIKLETKKTILFKNIVELYLRTGKPIGSKFLVEQDYGLGKSSATIRNMMHEFEEIGLLEKSHISSGRIPSTLGLKYYVKYLANSEDSDLKKQLKKLFFQRKLTIDETIELAAKSISEIVGLTMVTSTENSFETLKSIQLVLLDKNESIIIIVLSSGKVISKKLAMKDSIVLDDLRIAVRIFKERLIDTKVSELHEKTLALKPILKISIQNYEDILQEFIINIFDFEVSQTNNVYGKKNIILARDIKREDLTKIIKLIESTSIWQTIEDNLEEEENIKIEIRPDNSSFLSKKISIDNKIREISVVGSKKMDYAKAKSALMLIEDLVEENKKKEKGNNEDNEE</sequence>
<organism>
    <name type="scientific">Mycoplasmopsis pulmonis (strain UAB CTIP)</name>
    <name type="common">Mycoplasma pulmonis</name>
    <dbReference type="NCBI Taxonomy" id="272635"/>
    <lineage>
        <taxon>Bacteria</taxon>
        <taxon>Bacillati</taxon>
        <taxon>Mycoplasmatota</taxon>
        <taxon>Mycoplasmoidales</taxon>
        <taxon>Metamycoplasmataceae</taxon>
        <taxon>Mycoplasmopsis</taxon>
    </lineage>
</organism>